<proteinExistence type="inferred from homology"/>
<sequence length="113" mass="12753">MSNQALLETLNQTTELLSVKLAELAKLASMETNEDTEDCQLSVVTNGLMMVNNQTLQLVRGVQDLILLTRNIREKWLLTQIPEQLTPKEQDSINHEELTELLESCVSEIISDV</sequence>
<comment type="function">
    <text evidence="1">Component of the Mediator complex, a coactivator involved in the regulated transcription of nearly all RNA polymerase II-dependent genes. Mediator functions as a bridge to convey information from gene-specific regulatory proteins to the basal RNA polymerase II transcription machinery. Mediator is recruited to promoters by direct interactions with regulatory proteins and serves as a scaffold for the assembly of a functional preinitiation complex with RNA polymerase II and the general transcription factors (By similarity).</text>
</comment>
<comment type="subunit">
    <text evidence="1">Component of the Mediator complex.</text>
</comment>
<comment type="subcellular location">
    <subcellularLocation>
        <location evidence="1">Nucleus</location>
    </subcellularLocation>
</comment>
<comment type="similarity">
    <text evidence="2">Belongs to the Mediator complex subunit 22 family.</text>
</comment>
<keyword id="KW-0010">Activator</keyword>
<keyword id="KW-0539">Nucleus</keyword>
<keyword id="KW-1185">Reference proteome</keyword>
<keyword id="KW-0804">Transcription</keyword>
<keyword id="KW-0805">Transcription regulation</keyword>
<accession>Q6FVV1</accession>
<name>MED22_CANGA</name>
<feature type="chain" id="PRO_0000308577" description="Mediator of RNA polymerase II transcription subunit 22">
    <location>
        <begin position="1"/>
        <end position="113"/>
    </location>
</feature>
<protein>
    <recommendedName>
        <fullName>Mediator of RNA polymerase II transcription subunit 22</fullName>
    </recommendedName>
    <alternativeName>
        <fullName>Mediator complex subunit 22</fullName>
    </alternativeName>
</protein>
<evidence type="ECO:0000250" key="1"/>
<evidence type="ECO:0000305" key="2"/>
<gene>
    <name type="primary">SRB6</name>
    <name type="synonym">MED22</name>
    <name type="ordered locus">CAGL0D05368g</name>
</gene>
<organism>
    <name type="scientific">Candida glabrata (strain ATCC 2001 / BCRC 20586 / JCM 3761 / NBRC 0622 / NRRL Y-65 / CBS 138)</name>
    <name type="common">Yeast</name>
    <name type="synonym">Nakaseomyces glabratus</name>
    <dbReference type="NCBI Taxonomy" id="284593"/>
    <lineage>
        <taxon>Eukaryota</taxon>
        <taxon>Fungi</taxon>
        <taxon>Dikarya</taxon>
        <taxon>Ascomycota</taxon>
        <taxon>Saccharomycotina</taxon>
        <taxon>Saccharomycetes</taxon>
        <taxon>Saccharomycetales</taxon>
        <taxon>Saccharomycetaceae</taxon>
        <taxon>Nakaseomyces</taxon>
    </lineage>
</organism>
<reference key="1">
    <citation type="journal article" date="2004" name="Nature">
        <title>Genome evolution in yeasts.</title>
        <authorList>
            <person name="Dujon B."/>
            <person name="Sherman D."/>
            <person name="Fischer G."/>
            <person name="Durrens P."/>
            <person name="Casaregola S."/>
            <person name="Lafontaine I."/>
            <person name="de Montigny J."/>
            <person name="Marck C."/>
            <person name="Neuveglise C."/>
            <person name="Talla E."/>
            <person name="Goffard N."/>
            <person name="Frangeul L."/>
            <person name="Aigle M."/>
            <person name="Anthouard V."/>
            <person name="Babour A."/>
            <person name="Barbe V."/>
            <person name="Barnay S."/>
            <person name="Blanchin S."/>
            <person name="Beckerich J.-M."/>
            <person name="Beyne E."/>
            <person name="Bleykasten C."/>
            <person name="Boisrame A."/>
            <person name="Boyer J."/>
            <person name="Cattolico L."/>
            <person name="Confanioleri F."/>
            <person name="de Daruvar A."/>
            <person name="Despons L."/>
            <person name="Fabre E."/>
            <person name="Fairhead C."/>
            <person name="Ferry-Dumazet H."/>
            <person name="Groppi A."/>
            <person name="Hantraye F."/>
            <person name="Hennequin C."/>
            <person name="Jauniaux N."/>
            <person name="Joyet P."/>
            <person name="Kachouri R."/>
            <person name="Kerrest A."/>
            <person name="Koszul R."/>
            <person name="Lemaire M."/>
            <person name="Lesur I."/>
            <person name="Ma L."/>
            <person name="Muller H."/>
            <person name="Nicaud J.-M."/>
            <person name="Nikolski M."/>
            <person name="Oztas S."/>
            <person name="Ozier-Kalogeropoulos O."/>
            <person name="Pellenz S."/>
            <person name="Potier S."/>
            <person name="Richard G.-F."/>
            <person name="Straub M.-L."/>
            <person name="Suleau A."/>
            <person name="Swennen D."/>
            <person name="Tekaia F."/>
            <person name="Wesolowski-Louvel M."/>
            <person name="Westhof E."/>
            <person name="Wirth B."/>
            <person name="Zeniou-Meyer M."/>
            <person name="Zivanovic Y."/>
            <person name="Bolotin-Fukuhara M."/>
            <person name="Thierry A."/>
            <person name="Bouchier C."/>
            <person name="Caudron B."/>
            <person name="Scarpelli C."/>
            <person name="Gaillardin C."/>
            <person name="Weissenbach J."/>
            <person name="Wincker P."/>
            <person name="Souciet J.-L."/>
        </authorList>
    </citation>
    <scope>NUCLEOTIDE SEQUENCE [LARGE SCALE GENOMIC DNA]</scope>
    <source>
        <strain>ATCC 2001 / BCRC 20586 / JCM 3761 / NBRC 0622 / NRRL Y-65 / CBS 138</strain>
    </source>
</reference>
<dbReference type="EMBL" id="CR380950">
    <property type="protein sequence ID" value="CAG58554.1"/>
    <property type="molecule type" value="Genomic_DNA"/>
</dbReference>
<dbReference type="RefSeq" id="XP_445643.1">
    <property type="nucleotide sequence ID" value="XM_445643.1"/>
</dbReference>
<dbReference type="SMR" id="Q6FVV1"/>
<dbReference type="FunCoup" id="Q6FVV1">
    <property type="interactions" value="164"/>
</dbReference>
<dbReference type="STRING" id="284593.Q6FVV1"/>
<dbReference type="EnsemblFungi" id="CAGL0D05368g-T">
    <property type="protein sequence ID" value="CAGL0D05368g-T-p1"/>
    <property type="gene ID" value="CAGL0D05368g"/>
</dbReference>
<dbReference type="KEGG" id="cgr:2887146"/>
<dbReference type="CGD" id="CAL0128237">
    <property type="gene designation" value="CAGL0D05368g"/>
</dbReference>
<dbReference type="VEuPathDB" id="FungiDB:B1J91_D05368g"/>
<dbReference type="VEuPathDB" id="FungiDB:CAGL0D05368g"/>
<dbReference type="eggNOG" id="ENOG502S77A">
    <property type="taxonomic scope" value="Eukaryota"/>
</dbReference>
<dbReference type="HOGENOM" id="CLU_130571_0_0_1"/>
<dbReference type="InParanoid" id="Q6FVV1"/>
<dbReference type="OMA" id="WLLTQIP"/>
<dbReference type="Proteomes" id="UP000002428">
    <property type="component" value="Chromosome D"/>
</dbReference>
<dbReference type="GO" id="GO:0070847">
    <property type="term" value="C:core mediator complex"/>
    <property type="evidence" value="ECO:0007669"/>
    <property type="project" value="EnsemblFungi"/>
</dbReference>
<dbReference type="GO" id="GO:0016592">
    <property type="term" value="C:mediator complex"/>
    <property type="evidence" value="ECO:0007669"/>
    <property type="project" value="InterPro"/>
</dbReference>
<dbReference type="GO" id="GO:0003712">
    <property type="term" value="F:transcription coregulator activity"/>
    <property type="evidence" value="ECO:0007669"/>
    <property type="project" value="InterPro"/>
</dbReference>
<dbReference type="GO" id="GO:0032968">
    <property type="term" value="P:positive regulation of transcription elongation by RNA polymerase II"/>
    <property type="evidence" value="ECO:0007669"/>
    <property type="project" value="EnsemblFungi"/>
</dbReference>
<dbReference type="GO" id="GO:0060261">
    <property type="term" value="P:positive regulation of transcription initiation by RNA polymerase II"/>
    <property type="evidence" value="ECO:0007669"/>
    <property type="project" value="EnsemblFungi"/>
</dbReference>
<dbReference type="GO" id="GO:0051123">
    <property type="term" value="P:RNA polymerase II preinitiation complex assembly"/>
    <property type="evidence" value="ECO:0007669"/>
    <property type="project" value="EnsemblFungi"/>
</dbReference>
<dbReference type="Gene3D" id="6.10.280.160">
    <property type="entry name" value="Mediator of RNA polymerase II transcription subunit 22"/>
    <property type="match status" value="1"/>
</dbReference>
<dbReference type="InterPro" id="IPR009332">
    <property type="entry name" value="Med22"/>
</dbReference>
<dbReference type="InterPro" id="IPR016530">
    <property type="entry name" value="Med22_Saccharomyce"/>
</dbReference>
<dbReference type="Pfam" id="PF06179">
    <property type="entry name" value="Med22"/>
    <property type="match status" value="1"/>
</dbReference>
<dbReference type="PIRSF" id="PIRSF007936">
    <property type="entry name" value="SRB6"/>
    <property type="match status" value="1"/>
</dbReference>